<proteinExistence type="inferred from homology"/>
<evidence type="ECO:0000255" key="1">
    <source>
        <dbReference type="HAMAP-Rule" id="MF_00176"/>
    </source>
</evidence>
<evidence type="ECO:0000305" key="2"/>
<accession>Q8YGS6</accession>
<sequence length="427" mass="47520">MLDIKWIRENPETLDKALAKRGAAPLSSELIALDEKRREHVGKVQAAQERRNAASKEIGKAMAAKDMGTAEKLKAEVGELKDFLAHAEEDERRLSKELSDALSTIPNIPLDDVPLGKDESDNVELRRIGNPHNFSFQPKEHFELGEALGYMDFERAAKLAGARFTVLKGPLARLERALGQFMLDLHTTEHGYTEVMPPLMVRDEAVYGTGQLPKFSEDLFRTTDGRWLIPTAEVPLTNLVAEEIVDMKGLPLRFTALTPCFRSEAGSAGRDTRGMLRQHQFLKVEMVSITDAESSVAEHERMTACAEEVLKRLGLPFRTVVLCTGDMGFGAQRTYDIEVWLPGQNTYREISSCSTCGDFQGRRMNARYRPEGEKSTRFVHTLNGSGAAVGRALIAVMENYQQEDGSIHIPEALQPYMGGLTRIEKAA</sequence>
<dbReference type="EC" id="6.1.1.11" evidence="1"/>
<dbReference type="EMBL" id="AE008917">
    <property type="protein sequence ID" value="AAL52263.1"/>
    <property type="status" value="ALT_INIT"/>
    <property type="molecule type" value="Genomic_DNA"/>
</dbReference>
<dbReference type="PIR" id="AD3387">
    <property type="entry name" value="AD3387"/>
</dbReference>
<dbReference type="RefSeq" id="WP_004683702.1">
    <property type="nucleotide sequence ID" value="NZ_GG703778.1"/>
</dbReference>
<dbReference type="SMR" id="Q8YGS6"/>
<dbReference type="GeneID" id="29593923"/>
<dbReference type="KEGG" id="bme:BMEI1082"/>
<dbReference type="KEGG" id="bmel:DK63_331"/>
<dbReference type="PATRIC" id="fig|224914.52.peg.343"/>
<dbReference type="eggNOG" id="COG0172">
    <property type="taxonomic scope" value="Bacteria"/>
</dbReference>
<dbReference type="PhylomeDB" id="Q8YGS6"/>
<dbReference type="UniPathway" id="UPA00906">
    <property type="reaction ID" value="UER00895"/>
</dbReference>
<dbReference type="Proteomes" id="UP000000419">
    <property type="component" value="Chromosome I"/>
</dbReference>
<dbReference type="GO" id="GO:0005737">
    <property type="term" value="C:cytoplasm"/>
    <property type="evidence" value="ECO:0007669"/>
    <property type="project" value="UniProtKB-SubCell"/>
</dbReference>
<dbReference type="GO" id="GO:0005524">
    <property type="term" value="F:ATP binding"/>
    <property type="evidence" value="ECO:0007669"/>
    <property type="project" value="UniProtKB-UniRule"/>
</dbReference>
<dbReference type="GO" id="GO:0004828">
    <property type="term" value="F:serine-tRNA ligase activity"/>
    <property type="evidence" value="ECO:0007669"/>
    <property type="project" value="UniProtKB-UniRule"/>
</dbReference>
<dbReference type="GO" id="GO:0016260">
    <property type="term" value="P:selenocysteine biosynthetic process"/>
    <property type="evidence" value="ECO:0007669"/>
    <property type="project" value="UniProtKB-UniRule"/>
</dbReference>
<dbReference type="GO" id="GO:0006434">
    <property type="term" value="P:seryl-tRNA aminoacylation"/>
    <property type="evidence" value="ECO:0007669"/>
    <property type="project" value="UniProtKB-UniRule"/>
</dbReference>
<dbReference type="CDD" id="cd00770">
    <property type="entry name" value="SerRS_core"/>
    <property type="match status" value="1"/>
</dbReference>
<dbReference type="Gene3D" id="3.30.930.10">
    <property type="entry name" value="Bira Bifunctional Protein, Domain 2"/>
    <property type="match status" value="1"/>
</dbReference>
<dbReference type="Gene3D" id="1.10.287.40">
    <property type="entry name" value="Serine-tRNA synthetase, tRNA binding domain"/>
    <property type="match status" value="1"/>
</dbReference>
<dbReference type="HAMAP" id="MF_00176">
    <property type="entry name" value="Ser_tRNA_synth_type1"/>
    <property type="match status" value="1"/>
</dbReference>
<dbReference type="InterPro" id="IPR002314">
    <property type="entry name" value="aa-tRNA-synt_IIb"/>
</dbReference>
<dbReference type="InterPro" id="IPR006195">
    <property type="entry name" value="aa-tRNA-synth_II"/>
</dbReference>
<dbReference type="InterPro" id="IPR045864">
    <property type="entry name" value="aa-tRNA-synth_II/BPL/LPL"/>
</dbReference>
<dbReference type="InterPro" id="IPR002317">
    <property type="entry name" value="Ser-tRNA-ligase_type_1"/>
</dbReference>
<dbReference type="InterPro" id="IPR015866">
    <property type="entry name" value="Ser-tRNA-synth_1_N"/>
</dbReference>
<dbReference type="InterPro" id="IPR042103">
    <property type="entry name" value="SerRS_1_N_sf"/>
</dbReference>
<dbReference type="InterPro" id="IPR033729">
    <property type="entry name" value="SerRS_core"/>
</dbReference>
<dbReference type="InterPro" id="IPR010978">
    <property type="entry name" value="tRNA-bd_arm"/>
</dbReference>
<dbReference type="NCBIfam" id="TIGR00414">
    <property type="entry name" value="serS"/>
    <property type="match status" value="1"/>
</dbReference>
<dbReference type="PANTHER" id="PTHR43697:SF1">
    <property type="entry name" value="SERINE--TRNA LIGASE"/>
    <property type="match status" value="1"/>
</dbReference>
<dbReference type="PANTHER" id="PTHR43697">
    <property type="entry name" value="SERYL-TRNA SYNTHETASE"/>
    <property type="match status" value="1"/>
</dbReference>
<dbReference type="Pfam" id="PF02403">
    <property type="entry name" value="Seryl_tRNA_N"/>
    <property type="match status" value="1"/>
</dbReference>
<dbReference type="Pfam" id="PF00587">
    <property type="entry name" value="tRNA-synt_2b"/>
    <property type="match status" value="1"/>
</dbReference>
<dbReference type="PIRSF" id="PIRSF001529">
    <property type="entry name" value="Ser-tRNA-synth_IIa"/>
    <property type="match status" value="1"/>
</dbReference>
<dbReference type="PRINTS" id="PR00981">
    <property type="entry name" value="TRNASYNTHSER"/>
</dbReference>
<dbReference type="SUPFAM" id="SSF55681">
    <property type="entry name" value="Class II aaRS and biotin synthetases"/>
    <property type="match status" value="1"/>
</dbReference>
<dbReference type="SUPFAM" id="SSF46589">
    <property type="entry name" value="tRNA-binding arm"/>
    <property type="match status" value="1"/>
</dbReference>
<dbReference type="PROSITE" id="PS50862">
    <property type="entry name" value="AA_TRNA_LIGASE_II"/>
    <property type="match status" value="1"/>
</dbReference>
<keyword id="KW-0030">Aminoacyl-tRNA synthetase</keyword>
<keyword id="KW-0067">ATP-binding</keyword>
<keyword id="KW-0963">Cytoplasm</keyword>
<keyword id="KW-0436">Ligase</keyword>
<keyword id="KW-0547">Nucleotide-binding</keyword>
<keyword id="KW-0648">Protein biosynthesis</keyword>
<comment type="function">
    <text evidence="1">Catalyzes the attachment of serine to tRNA(Ser). Is also able to aminoacylate tRNA(Sec) with serine, to form the misacylated tRNA L-seryl-tRNA(Sec), which will be further converted into selenocysteinyl-tRNA(Sec).</text>
</comment>
<comment type="catalytic activity">
    <reaction evidence="1">
        <text>tRNA(Ser) + L-serine + ATP = L-seryl-tRNA(Ser) + AMP + diphosphate + H(+)</text>
        <dbReference type="Rhea" id="RHEA:12292"/>
        <dbReference type="Rhea" id="RHEA-COMP:9669"/>
        <dbReference type="Rhea" id="RHEA-COMP:9703"/>
        <dbReference type="ChEBI" id="CHEBI:15378"/>
        <dbReference type="ChEBI" id="CHEBI:30616"/>
        <dbReference type="ChEBI" id="CHEBI:33019"/>
        <dbReference type="ChEBI" id="CHEBI:33384"/>
        <dbReference type="ChEBI" id="CHEBI:78442"/>
        <dbReference type="ChEBI" id="CHEBI:78533"/>
        <dbReference type="ChEBI" id="CHEBI:456215"/>
        <dbReference type="EC" id="6.1.1.11"/>
    </reaction>
</comment>
<comment type="catalytic activity">
    <reaction evidence="1">
        <text>tRNA(Sec) + L-serine + ATP = L-seryl-tRNA(Sec) + AMP + diphosphate + H(+)</text>
        <dbReference type="Rhea" id="RHEA:42580"/>
        <dbReference type="Rhea" id="RHEA-COMP:9742"/>
        <dbReference type="Rhea" id="RHEA-COMP:10128"/>
        <dbReference type="ChEBI" id="CHEBI:15378"/>
        <dbReference type="ChEBI" id="CHEBI:30616"/>
        <dbReference type="ChEBI" id="CHEBI:33019"/>
        <dbReference type="ChEBI" id="CHEBI:33384"/>
        <dbReference type="ChEBI" id="CHEBI:78442"/>
        <dbReference type="ChEBI" id="CHEBI:78533"/>
        <dbReference type="ChEBI" id="CHEBI:456215"/>
        <dbReference type="EC" id="6.1.1.11"/>
    </reaction>
</comment>
<comment type="pathway">
    <text evidence="1">Aminoacyl-tRNA biosynthesis; selenocysteinyl-tRNA(Sec) biosynthesis; L-seryl-tRNA(Sec) from L-serine and tRNA(Sec): step 1/1.</text>
</comment>
<comment type="subunit">
    <text evidence="1">Homodimer. The tRNA molecule binds across the dimer.</text>
</comment>
<comment type="subcellular location">
    <subcellularLocation>
        <location evidence="1">Cytoplasm</location>
    </subcellularLocation>
</comment>
<comment type="domain">
    <text evidence="1">Consists of two distinct domains, a catalytic core and a N-terminal extension that is involved in tRNA binding.</text>
</comment>
<comment type="similarity">
    <text evidence="1">Belongs to the class-II aminoacyl-tRNA synthetase family. Type-1 seryl-tRNA synthetase subfamily.</text>
</comment>
<comment type="sequence caution" evidence="2">
    <conflict type="erroneous initiation">
        <sequence resource="EMBL-CDS" id="AAL52263"/>
    </conflict>
</comment>
<name>SYS_BRUME</name>
<feature type="chain" id="PRO_0000122016" description="Serine--tRNA ligase">
    <location>
        <begin position="1"/>
        <end position="427"/>
    </location>
</feature>
<feature type="binding site" evidence="1">
    <location>
        <begin position="231"/>
        <end position="233"/>
    </location>
    <ligand>
        <name>L-serine</name>
        <dbReference type="ChEBI" id="CHEBI:33384"/>
    </ligand>
</feature>
<feature type="binding site" evidence="1">
    <location>
        <begin position="262"/>
        <end position="264"/>
    </location>
    <ligand>
        <name>ATP</name>
        <dbReference type="ChEBI" id="CHEBI:30616"/>
    </ligand>
</feature>
<feature type="binding site" evidence="1">
    <location>
        <position position="285"/>
    </location>
    <ligand>
        <name>L-serine</name>
        <dbReference type="ChEBI" id="CHEBI:33384"/>
    </ligand>
</feature>
<feature type="binding site" evidence="1">
    <location>
        <begin position="349"/>
        <end position="352"/>
    </location>
    <ligand>
        <name>ATP</name>
        <dbReference type="ChEBI" id="CHEBI:30616"/>
    </ligand>
</feature>
<feature type="binding site" evidence="1">
    <location>
        <position position="385"/>
    </location>
    <ligand>
        <name>L-serine</name>
        <dbReference type="ChEBI" id="CHEBI:33384"/>
    </ligand>
</feature>
<protein>
    <recommendedName>
        <fullName evidence="1">Serine--tRNA ligase</fullName>
        <ecNumber evidence="1">6.1.1.11</ecNumber>
    </recommendedName>
    <alternativeName>
        <fullName evidence="1">Seryl-tRNA synthetase</fullName>
        <shortName evidence="1">SerRS</shortName>
    </alternativeName>
    <alternativeName>
        <fullName evidence="1">Seryl-tRNA(Ser/Sec) synthetase</fullName>
    </alternativeName>
</protein>
<gene>
    <name evidence="1" type="primary">serS</name>
    <name type="ordered locus">BMEI1082</name>
</gene>
<organism>
    <name type="scientific">Brucella melitensis biotype 1 (strain ATCC 23456 / CCUG 17765 / NCTC 10094 / 16M)</name>
    <dbReference type="NCBI Taxonomy" id="224914"/>
    <lineage>
        <taxon>Bacteria</taxon>
        <taxon>Pseudomonadati</taxon>
        <taxon>Pseudomonadota</taxon>
        <taxon>Alphaproteobacteria</taxon>
        <taxon>Hyphomicrobiales</taxon>
        <taxon>Brucellaceae</taxon>
        <taxon>Brucella/Ochrobactrum group</taxon>
        <taxon>Brucella</taxon>
    </lineage>
</organism>
<reference key="1">
    <citation type="journal article" date="2002" name="Proc. Natl. Acad. Sci. U.S.A.">
        <title>The genome sequence of the facultative intracellular pathogen Brucella melitensis.</title>
        <authorList>
            <person name="DelVecchio V.G."/>
            <person name="Kapatral V."/>
            <person name="Redkar R.J."/>
            <person name="Patra G."/>
            <person name="Mujer C."/>
            <person name="Los T."/>
            <person name="Ivanova N."/>
            <person name="Anderson I."/>
            <person name="Bhattacharyya A."/>
            <person name="Lykidis A."/>
            <person name="Reznik G."/>
            <person name="Jablonski L."/>
            <person name="Larsen N."/>
            <person name="D'Souza M."/>
            <person name="Bernal A."/>
            <person name="Mazur M."/>
            <person name="Goltsman E."/>
            <person name="Selkov E."/>
            <person name="Elzer P.H."/>
            <person name="Hagius S."/>
            <person name="O'Callaghan D."/>
            <person name="Letesson J.-J."/>
            <person name="Haselkorn R."/>
            <person name="Kyrpides N.C."/>
            <person name="Overbeek R."/>
        </authorList>
    </citation>
    <scope>NUCLEOTIDE SEQUENCE [LARGE SCALE GENOMIC DNA]</scope>
    <source>
        <strain>ATCC 23456 / CCUG 17765 / NCTC 10094 / 16M</strain>
    </source>
</reference>